<proteinExistence type="evidence at protein level"/>
<comment type="function">
    <text evidence="3">Catalyzes the reversible conversion of alpha-D-glucosamine 6-phosphate (GlcN-6P) into beta-D-fructose 6-phosphate (Fru-6P) and ammonium ion, a regulatory reaction step in de novo uridine diphosphate-N-acetyl-alpha-D-glucosamine (UDP-GlcNAc) biosynthesis via hexosamine pathway. Deamination is coupled to aldo-keto isomerization mediating the metabolic flux from UDP-GlcNAc toward Fru-6P. At high ammonium level can drive amination and isomerization of Fru-6P toward hexosamines and UDP-GlcNAc synthesis. Has a role in fine tuning the metabolic fluctuations of cytosolic UDP-GlcNAc and their effects on hyaluronan synthesis that occur during tissue remodeling.</text>
</comment>
<comment type="catalytic activity">
    <reaction evidence="3">
        <text>alpha-D-glucosamine 6-phosphate + H2O = beta-D-fructose 6-phosphate + NH4(+)</text>
        <dbReference type="Rhea" id="RHEA:12172"/>
        <dbReference type="ChEBI" id="CHEBI:15377"/>
        <dbReference type="ChEBI" id="CHEBI:28938"/>
        <dbReference type="ChEBI" id="CHEBI:57634"/>
        <dbReference type="ChEBI" id="CHEBI:75989"/>
        <dbReference type="EC" id="3.5.99.6"/>
    </reaction>
    <physiologicalReaction direction="left-to-right" evidence="3">
        <dbReference type="Rhea" id="RHEA:12173"/>
    </physiologicalReaction>
    <physiologicalReaction direction="right-to-left" evidence="3">
        <dbReference type="Rhea" id="RHEA:12174"/>
    </physiologicalReaction>
</comment>
<comment type="activity regulation">
    <text evidence="3">Allosterically activated by N-acetylglucosamine-6-phosphate (GlcNAc6P).</text>
</comment>
<comment type="pathway">
    <text evidence="3">Nucleotide-sugar biosynthesis; UDP-N-acetyl-alpha-D-glucosamine biosynthesis; alpha-D-glucosamine 6-phosphate from D-fructose 6-phosphate: step 1/1.</text>
</comment>
<comment type="subunit">
    <text evidence="1">Homohexamer.</text>
</comment>
<comment type="subcellular location">
    <subcellularLocation>
        <location evidence="1">Cytoplasm</location>
    </subcellularLocation>
</comment>
<comment type="alternative products">
    <event type="alternative splicing"/>
    <isoform>
        <id>Q9CRC9-1</id>
        <name>1</name>
        <sequence type="displayed"/>
    </isoform>
    <isoform>
        <id>Q9CRC9-2</id>
        <name>2</name>
        <sequence type="described" ref="VSP_034581"/>
    </isoform>
</comment>
<comment type="similarity">
    <text evidence="6">Belongs to the glucosamine/galactosamine-6-phosphate isomerase family.</text>
</comment>
<dbReference type="EC" id="3.5.99.6" evidence="3"/>
<dbReference type="EMBL" id="AK015527">
    <property type="protein sequence ID" value="BAB29883.1"/>
    <property type="molecule type" value="mRNA"/>
</dbReference>
<dbReference type="EMBL" id="AK016785">
    <property type="protein sequence ID" value="BAB30428.1"/>
    <property type="molecule type" value="mRNA"/>
</dbReference>
<dbReference type="EMBL" id="AK017588">
    <property type="protein sequence ID" value="BAB30824.1"/>
    <property type="molecule type" value="mRNA"/>
</dbReference>
<dbReference type="EMBL" id="AK141408">
    <property type="protein sequence ID" value="BAE24675.1"/>
    <property type="molecule type" value="mRNA"/>
</dbReference>
<dbReference type="EMBL" id="AK166601">
    <property type="protein sequence ID" value="BAE38886.1"/>
    <property type="molecule type" value="mRNA"/>
</dbReference>
<dbReference type="EMBL" id="AK168516">
    <property type="protein sequence ID" value="BAE40396.1"/>
    <property type="molecule type" value="mRNA"/>
</dbReference>
<dbReference type="EMBL" id="AK171299">
    <property type="protein sequence ID" value="BAE42378.1"/>
    <property type="molecule type" value="mRNA"/>
</dbReference>
<dbReference type="EMBL" id="BC004084">
    <property type="protein sequence ID" value="AAH04084.1"/>
    <property type="molecule type" value="mRNA"/>
</dbReference>
<dbReference type="CCDS" id="CCDS19324.1">
    <molecule id="Q9CRC9-1"/>
</dbReference>
<dbReference type="CCDS" id="CCDS84888.1">
    <molecule id="Q9CRC9-2"/>
</dbReference>
<dbReference type="RefSeq" id="NP_001033104.1">
    <molecule id="Q9CRC9-1"/>
    <property type="nucleotide sequence ID" value="NM_001038015.2"/>
</dbReference>
<dbReference type="RefSeq" id="NP_001334292.1">
    <molecule id="Q9CRC9-2"/>
    <property type="nucleotide sequence ID" value="NM_001347363.1"/>
</dbReference>
<dbReference type="SMR" id="Q9CRC9"/>
<dbReference type="BioGRID" id="212579">
    <property type="interactions" value="1"/>
</dbReference>
<dbReference type="FunCoup" id="Q9CRC9">
    <property type="interactions" value="1710"/>
</dbReference>
<dbReference type="STRING" id="10090.ENSMUSP00000031117"/>
<dbReference type="iPTMnet" id="Q9CRC9"/>
<dbReference type="PhosphoSitePlus" id="Q9CRC9"/>
<dbReference type="SwissPalm" id="Q9CRC9"/>
<dbReference type="REPRODUCTION-2DPAGE" id="Q3TH02"/>
<dbReference type="REPRODUCTION-2DPAGE" id="Q9CRC9"/>
<dbReference type="jPOST" id="Q9CRC9"/>
<dbReference type="PaxDb" id="10090-ENSMUSP00000031117"/>
<dbReference type="PeptideAtlas" id="Q9CRC9"/>
<dbReference type="ProteomicsDB" id="263384">
    <molecule id="Q9CRC9-1"/>
</dbReference>
<dbReference type="ProteomicsDB" id="263385">
    <molecule id="Q9CRC9-2"/>
</dbReference>
<dbReference type="Pumba" id="Q9CRC9"/>
<dbReference type="Antibodypedia" id="23728">
    <property type="antibodies" value="126 antibodies from 28 providers"/>
</dbReference>
<dbReference type="DNASU" id="67980"/>
<dbReference type="Ensembl" id="ENSMUST00000031117.13">
    <molecule id="Q9CRC9-1"/>
    <property type="protein sequence ID" value="ENSMUSP00000031117.7"/>
    <property type="gene ID" value="ENSMUSG00000029209.16"/>
</dbReference>
<dbReference type="Ensembl" id="ENSMUST00000139632.8">
    <molecule id="Q9CRC9-1"/>
    <property type="protein sequence ID" value="ENSMUSP00000121014.2"/>
    <property type="gene ID" value="ENSMUSG00000029209.16"/>
</dbReference>
<dbReference type="Ensembl" id="ENSMUST00000166298.8">
    <molecule id="Q9CRC9-2"/>
    <property type="protein sequence ID" value="ENSMUSP00000128233.2"/>
    <property type="gene ID" value="ENSMUSG00000029209.16"/>
</dbReference>
<dbReference type="Ensembl" id="ENSMUST00000173927.8">
    <molecule id="Q9CRC9-2"/>
    <property type="protein sequence ID" value="ENSMUSP00000133490.2"/>
    <property type="gene ID" value="ENSMUSG00000029209.16"/>
</dbReference>
<dbReference type="GeneID" id="67980"/>
<dbReference type="KEGG" id="mmu:67980"/>
<dbReference type="UCSC" id="uc008xqq.1">
    <molecule id="Q9CRC9-1"/>
    <property type="organism name" value="mouse"/>
</dbReference>
<dbReference type="AGR" id="MGI:1915230"/>
<dbReference type="CTD" id="132789"/>
<dbReference type="MGI" id="MGI:1915230">
    <property type="gene designation" value="Gnpda2"/>
</dbReference>
<dbReference type="VEuPathDB" id="HostDB:ENSMUSG00000029209"/>
<dbReference type="eggNOG" id="KOG3148">
    <property type="taxonomic scope" value="Eukaryota"/>
</dbReference>
<dbReference type="GeneTree" id="ENSGT00390000014316"/>
<dbReference type="HOGENOM" id="CLU_049611_0_1_1"/>
<dbReference type="InParanoid" id="Q9CRC9"/>
<dbReference type="OMA" id="RGHVAFH"/>
<dbReference type="OrthoDB" id="7663298at2759"/>
<dbReference type="PhylomeDB" id="Q9CRC9"/>
<dbReference type="TreeFam" id="TF300841"/>
<dbReference type="Reactome" id="R-MMU-70171">
    <property type="pathway name" value="Glycolysis"/>
</dbReference>
<dbReference type="UniPathway" id="UPA00113">
    <property type="reaction ID" value="UER00528"/>
</dbReference>
<dbReference type="BioGRID-ORCS" id="67980">
    <property type="hits" value="1 hit in 77 CRISPR screens"/>
</dbReference>
<dbReference type="ChiTaRS" id="Gnpda2">
    <property type="organism name" value="mouse"/>
</dbReference>
<dbReference type="PRO" id="PR:Q9CRC9"/>
<dbReference type="Proteomes" id="UP000000589">
    <property type="component" value="Chromosome 5"/>
</dbReference>
<dbReference type="RNAct" id="Q9CRC9">
    <property type="molecule type" value="protein"/>
</dbReference>
<dbReference type="Bgee" id="ENSMUSG00000029209">
    <property type="expression patterns" value="Expressed in spermatid and 246 other cell types or tissues"/>
</dbReference>
<dbReference type="ExpressionAtlas" id="Q9CRC9">
    <property type="expression patterns" value="baseline and differential"/>
</dbReference>
<dbReference type="GO" id="GO:0005737">
    <property type="term" value="C:cytoplasm"/>
    <property type="evidence" value="ECO:0007669"/>
    <property type="project" value="UniProtKB-SubCell"/>
</dbReference>
<dbReference type="GO" id="GO:0004342">
    <property type="term" value="F:glucosamine-6-phosphate deaminase activity"/>
    <property type="evidence" value="ECO:0000250"/>
    <property type="project" value="UniProtKB"/>
</dbReference>
<dbReference type="GO" id="GO:0016853">
    <property type="term" value="F:isomerase activity"/>
    <property type="evidence" value="ECO:0007669"/>
    <property type="project" value="UniProtKB-KW"/>
</dbReference>
<dbReference type="GO" id="GO:0005975">
    <property type="term" value="P:carbohydrate metabolic process"/>
    <property type="evidence" value="ECO:0007669"/>
    <property type="project" value="InterPro"/>
</dbReference>
<dbReference type="GO" id="GO:0006044">
    <property type="term" value="P:N-acetylglucosamine metabolic process"/>
    <property type="evidence" value="ECO:0007669"/>
    <property type="project" value="InterPro"/>
</dbReference>
<dbReference type="GO" id="GO:0006048">
    <property type="term" value="P:UDP-N-acetylglucosamine biosynthetic process"/>
    <property type="evidence" value="ECO:0000250"/>
    <property type="project" value="UniProtKB"/>
</dbReference>
<dbReference type="CDD" id="cd01399">
    <property type="entry name" value="GlcN6P_deaminase"/>
    <property type="match status" value="1"/>
</dbReference>
<dbReference type="FunFam" id="3.40.50.1360:FF:000004">
    <property type="entry name" value="Glucosamine-6-phosphate isomerase"/>
    <property type="match status" value="1"/>
</dbReference>
<dbReference type="Gene3D" id="3.40.50.1360">
    <property type="match status" value="1"/>
</dbReference>
<dbReference type="HAMAP" id="MF_01241">
    <property type="entry name" value="GlcN6P_deamin"/>
    <property type="match status" value="1"/>
</dbReference>
<dbReference type="InterPro" id="IPR006148">
    <property type="entry name" value="Glc/Gal-6P_isomerase"/>
</dbReference>
<dbReference type="InterPro" id="IPR004547">
    <property type="entry name" value="Glucosamine6P_isomerase"/>
</dbReference>
<dbReference type="InterPro" id="IPR018321">
    <property type="entry name" value="Glucosamine6P_isomerase_CS"/>
</dbReference>
<dbReference type="InterPro" id="IPR037171">
    <property type="entry name" value="NagB/RpiA_transferase-like"/>
</dbReference>
<dbReference type="NCBIfam" id="TIGR00502">
    <property type="entry name" value="nagB"/>
    <property type="match status" value="1"/>
</dbReference>
<dbReference type="PANTHER" id="PTHR11280">
    <property type="entry name" value="GLUCOSAMINE-6-PHOSPHATE ISOMERASE"/>
    <property type="match status" value="1"/>
</dbReference>
<dbReference type="PANTHER" id="PTHR11280:SF9">
    <property type="entry name" value="GLUCOSAMINE-6-PHOSPHATE ISOMERASE 2"/>
    <property type="match status" value="1"/>
</dbReference>
<dbReference type="Pfam" id="PF01182">
    <property type="entry name" value="Glucosamine_iso"/>
    <property type="match status" value="1"/>
</dbReference>
<dbReference type="SUPFAM" id="SSF100950">
    <property type="entry name" value="NagB/RpiA/CoA transferase-like"/>
    <property type="match status" value="1"/>
</dbReference>
<dbReference type="PROSITE" id="PS01161">
    <property type="entry name" value="GLC_GALNAC_ISOMERASE"/>
    <property type="match status" value="1"/>
</dbReference>
<organism evidence="8">
    <name type="scientific">Mus musculus</name>
    <name type="common">Mouse</name>
    <dbReference type="NCBI Taxonomy" id="10090"/>
    <lineage>
        <taxon>Eukaryota</taxon>
        <taxon>Metazoa</taxon>
        <taxon>Chordata</taxon>
        <taxon>Craniata</taxon>
        <taxon>Vertebrata</taxon>
        <taxon>Euteleostomi</taxon>
        <taxon>Mammalia</taxon>
        <taxon>Eutheria</taxon>
        <taxon>Euarchontoglires</taxon>
        <taxon>Glires</taxon>
        <taxon>Rodentia</taxon>
        <taxon>Myomorpha</taxon>
        <taxon>Muroidea</taxon>
        <taxon>Muridae</taxon>
        <taxon>Murinae</taxon>
        <taxon>Mus</taxon>
        <taxon>Mus</taxon>
    </lineage>
</organism>
<evidence type="ECO:0000250" key="1"/>
<evidence type="ECO:0000250" key="2">
    <source>
        <dbReference type="UniProtKB" id="O88958"/>
    </source>
</evidence>
<evidence type="ECO:0000250" key="3">
    <source>
        <dbReference type="UniProtKB" id="Q8TDQ7"/>
    </source>
</evidence>
<evidence type="ECO:0000255" key="4"/>
<evidence type="ECO:0000303" key="5">
    <source>
    </source>
</evidence>
<evidence type="ECO:0000305" key="6"/>
<evidence type="ECO:0000312" key="7">
    <source>
        <dbReference type="MGI" id="MGI:1915230"/>
    </source>
</evidence>
<evidence type="ECO:0000312" key="8">
    <source>
        <dbReference type="Proteomes" id="UP000000589"/>
    </source>
</evidence>
<gene>
    <name evidence="7" type="primary">Gnpda2</name>
    <name type="synonym">Kiaa4008</name>
</gene>
<protein>
    <recommendedName>
        <fullName evidence="7">Glucosamine-6-phosphate deaminase 2</fullName>
        <shortName>GlcN6P deaminase 2</shortName>
        <ecNumber evidence="3">3.5.99.6</ecNumber>
    </recommendedName>
    <alternativeName>
        <fullName evidence="6">Glucosamine-6-phosphate isomerase 2</fullName>
    </alternativeName>
</protein>
<name>GNPI2_MOUSE</name>
<sequence length="276" mass="31084">MRLVILDNYDLASEWAAKYICNRIIKFKPGQDRYFSLGLPTGSTPLGCYKKLIEYHKSGNLSFKYVKTFNMDEYVGLPRNHPESYHSYMWNNFFKHIDIDPNNAHILDGNAADLQAECDAFEEKIKEAGGIDLFVGGIGPDGHIAFNEPGSSLVSRTRLKTLAMDTILANAKYFDGDLSKVPTMALTVGVGTVMDAREVMILITGAHKAFALYKAMEEGVNHMWTVSAFQQHPRTIFVCDEDATLELRVKTVKYFKGLMHVHNKLVDPLYSMKEGN</sequence>
<feature type="chain" id="PRO_0000343206" description="Glucosamine-6-phosphate deaminase 2">
    <location>
        <begin position="1"/>
        <end position="276"/>
    </location>
</feature>
<feature type="coiled-coil region" evidence="4">
    <location>
        <begin position="103"/>
        <end position="131"/>
    </location>
</feature>
<feature type="active site" description="Proton acceptor; for enolization step" evidence="1">
    <location>
        <position position="72"/>
    </location>
</feature>
<feature type="active site" description="For ring-opening step" evidence="1">
    <location>
        <position position="141"/>
    </location>
</feature>
<feature type="active site" description="Proton acceptor; for ring-opening step" evidence="1">
    <location>
        <position position="143"/>
    </location>
</feature>
<feature type="active site" description="For ring-opening step" evidence="1">
    <location>
        <position position="148"/>
    </location>
</feature>
<feature type="modified residue" description="Phosphothreonine" evidence="2">
    <location>
        <position position="161"/>
    </location>
</feature>
<feature type="splice variant" id="VSP_034581" description="In isoform 2." evidence="5">
    <location>
        <begin position="137"/>
        <end position="138"/>
    </location>
</feature>
<feature type="sequence conflict" description="In Ref. 1; BAE40396." evidence="6" ref="1">
    <original>P</original>
    <variation>T</variation>
    <location>
        <position position="101"/>
    </location>
</feature>
<accession>Q9CRC9</accession>
<accession>Q3TH02</accession>
<accession>Q9D457</accession>
<reference key="1">
    <citation type="journal article" date="2005" name="Science">
        <title>The transcriptional landscape of the mammalian genome.</title>
        <authorList>
            <person name="Carninci P."/>
            <person name="Kasukawa T."/>
            <person name="Katayama S."/>
            <person name="Gough J."/>
            <person name="Frith M.C."/>
            <person name="Maeda N."/>
            <person name="Oyama R."/>
            <person name="Ravasi T."/>
            <person name="Lenhard B."/>
            <person name="Wells C."/>
            <person name="Kodzius R."/>
            <person name="Shimokawa K."/>
            <person name="Bajic V.B."/>
            <person name="Brenner S.E."/>
            <person name="Batalov S."/>
            <person name="Forrest A.R."/>
            <person name="Zavolan M."/>
            <person name="Davis M.J."/>
            <person name="Wilming L.G."/>
            <person name="Aidinis V."/>
            <person name="Allen J.E."/>
            <person name="Ambesi-Impiombato A."/>
            <person name="Apweiler R."/>
            <person name="Aturaliya R.N."/>
            <person name="Bailey T.L."/>
            <person name="Bansal M."/>
            <person name="Baxter L."/>
            <person name="Beisel K.W."/>
            <person name="Bersano T."/>
            <person name="Bono H."/>
            <person name="Chalk A.M."/>
            <person name="Chiu K.P."/>
            <person name="Choudhary V."/>
            <person name="Christoffels A."/>
            <person name="Clutterbuck D.R."/>
            <person name="Crowe M.L."/>
            <person name="Dalla E."/>
            <person name="Dalrymple B.P."/>
            <person name="de Bono B."/>
            <person name="Della Gatta G."/>
            <person name="di Bernardo D."/>
            <person name="Down T."/>
            <person name="Engstrom P."/>
            <person name="Fagiolini M."/>
            <person name="Faulkner G."/>
            <person name="Fletcher C.F."/>
            <person name="Fukushima T."/>
            <person name="Furuno M."/>
            <person name="Futaki S."/>
            <person name="Gariboldi M."/>
            <person name="Georgii-Hemming P."/>
            <person name="Gingeras T.R."/>
            <person name="Gojobori T."/>
            <person name="Green R.E."/>
            <person name="Gustincich S."/>
            <person name="Harbers M."/>
            <person name="Hayashi Y."/>
            <person name="Hensch T.K."/>
            <person name="Hirokawa N."/>
            <person name="Hill D."/>
            <person name="Huminiecki L."/>
            <person name="Iacono M."/>
            <person name="Ikeo K."/>
            <person name="Iwama A."/>
            <person name="Ishikawa T."/>
            <person name="Jakt M."/>
            <person name="Kanapin A."/>
            <person name="Katoh M."/>
            <person name="Kawasawa Y."/>
            <person name="Kelso J."/>
            <person name="Kitamura H."/>
            <person name="Kitano H."/>
            <person name="Kollias G."/>
            <person name="Krishnan S.P."/>
            <person name="Kruger A."/>
            <person name="Kummerfeld S.K."/>
            <person name="Kurochkin I.V."/>
            <person name="Lareau L.F."/>
            <person name="Lazarevic D."/>
            <person name="Lipovich L."/>
            <person name="Liu J."/>
            <person name="Liuni S."/>
            <person name="McWilliam S."/>
            <person name="Madan Babu M."/>
            <person name="Madera M."/>
            <person name="Marchionni L."/>
            <person name="Matsuda H."/>
            <person name="Matsuzawa S."/>
            <person name="Miki H."/>
            <person name="Mignone F."/>
            <person name="Miyake S."/>
            <person name="Morris K."/>
            <person name="Mottagui-Tabar S."/>
            <person name="Mulder N."/>
            <person name="Nakano N."/>
            <person name="Nakauchi H."/>
            <person name="Ng P."/>
            <person name="Nilsson R."/>
            <person name="Nishiguchi S."/>
            <person name="Nishikawa S."/>
            <person name="Nori F."/>
            <person name="Ohara O."/>
            <person name="Okazaki Y."/>
            <person name="Orlando V."/>
            <person name="Pang K.C."/>
            <person name="Pavan W.J."/>
            <person name="Pavesi G."/>
            <person name="Pesole G."/>
            <person name="Petrovsky N."/>
            <person name="Piazza S."/>
            <person name="Reed J."/>
            <person name="Reid J.F."/>
            <person name="Ring B.Z."/>
            <person name="Ringwald M."/>
            <person name="Rost B."/>
            <person name="Ruan Y."/>
            <person name="Salzberg S.L."/>
            <person name="Sandelin A."/>
            <person name="Schneider C."/>
            <person name="Schoenbach C."/>
            <person name="Sekiguchi K."/>
            <person name="Semple C.A."/>
            <person name="Seno S."/>
            <person name="Sessa L."/>
            <person name="Sheng Y."/>
            <person name="Shibata Y."/>
            <person name="Shimada H."/>
            <person name="Shimada K."/>
            <person name="Silva D."/>
            <person name="Sinclair B."/>
            <person name="Sperling S."/>
            <person name="Stupka E."/>
            <person name="Sugiura K."/>
            <person name="Sultana R."/>
            <person name="Takenaka Y."/>
            <person name="Taki K."/>
            <person name="Tammoja K."/>
            <person name="Tan S.L."/>
            <person name="Tang S."/>
            <person name="Taylor M.S."/>
            <person name="Tegner J."/>
            <person name="Teichmann S.A."/>
            <person name="Ueda H.R."/>
            <person name="van Nimwegen E."/>
            <person name="Verardo R."/>
            <person name="Wei C.L."/>
            <person name="Yagi K."/>
            <person name="Yamanishi H."/>
            <person name="Zabarovsky E."/>
            <person name="Zhu S."/>
            <person name="Zimmer A."/>
            <person name="Hide W."/>
            <person name="Bult C."/>
            <person name="Grimmond S.M."/>
            <person name="Teasdale R.D."/>
            <person name="Liu E.T."/>
            <person name="Brusic V."/>
            <person name="Quackenbush J."/>
            <person name="Wahlestedt C."/>
            <person name="Mattick J.S."/>
            <person name="Hume D.A."/>
            <person name="Kai C."/>
            <person name="Sasaki D."/>
            <person name="Tomaru Y."/>
            <person name="Fukuda S."/>
            <person name="Kanamori-Katayama M."/>
            <person name="Suzuki M."/>
            <person name="Aoki J."/>
            <person name="Arakawa T."/>
            <person name="Iida J."/>
            <person name="Imamura K."/>
            <person name="Itoh M."/>
            <person name="Kato T."/>
            <person name="Kawaji H."/>
            <person name="Kawagashira N."/>
            <person name="Kawashima T."/>
            <person name="Kojima M."/>
            <person name="Kondo S."/>
            <person name="Konno H."/>
            <person name="Nakano K."/>
            <person name="Ninomiya N."/>
            <person name="Nishio T."/>
            <person name="Okada M."/>
            <person name="Plessy C."/>
            <person name="Shibata K."/>
            <person name="Shiraki T."/>
            <person name="Suzuki S."/>
            <person name="Tagami M."/>
            <person name="Waki K."/>
            <person name="Watahiki A."/>
            <person name="Okamura-Oho Y."/>
            <person name="Suzuki H."/>
            <person name="Kawai J."/>
            <person name="Hayashizaki Y."/>
        </authorList>
    </citation>
    <scope>NUCLEOTIDE SEQUENCE [LARGE SCALE MRNA] (ISOFORMS 1 AND 2)</scope>
    <source>
        <strain>C57BL/6J</strain>
        <strain>NOD</strain>
        <tissue>Kidney</tissue>
        <tissue>Spinal cord</tissue>
        <tissue>Testis</tissue>
    </source>
</reference>
<reference key="2">
    <citation type="journal article" date="2004" name="Genome Res.">
        <title>The status, quality, and expansion of the NIH full-length cDNA project: the Mammalian Gene Collection (MGC).</title>
        <authorList>
            <consortium name="The MGC Project Team"/>
        </authorList>
    </citation>
    <scope>NUCLEOTIDE SEQUENCE [LARGE SCALE MRNA] (ISOFORM 1)</scope>
    <source>
        <strain>FVB/N</strain>
        <tissue>Mammary tumor</tissue>
    </source>
</reference>
<reference key="3">
    <citation type="journal article" date="2010" name="Cell">
        <title>A tissue-specific atlas of mouse protein phosphorylation and expression.</title>
        <authorList>
            <person name="Huttlin E.L."/>
            <person name="Jedrychowski M.P."/>
            <person name="Elias J.E."/>
            <person name="Goswami T."/>
            <person name="Rad R."/>
            <person name="Beausoleil S.A."/>
            <person name="Villen J."/>
            <person name="Haas W."/>
            <person name="Sowa M.E."/>
            <person name="Gygi S.P."/>
        </authorList>
    </citation>
    <scope>IDENTIFICATION BY MASS SPECTROMETRY [LARGE SCALE ANALYSIS]</scope>
    <source>
        <tissue>Brain</tissue>
        <tissue>Heart</tissue>
        <tissue>Kidney</tissue>
        <tissue>Lung</tissue>
        <tissue>Spleen</tissue>
        <tissue>Testis</tissue>
    </source>
</reference>
<keyword id="KW-0025">Alternative splicing</keyword>
<keyword id="KW-0119">Carbohydrate metabolism</keyword>
<keyword id="KW-0175">Coiled coil</keyword>
<keyword id="KW-0963">Cytoplasm</keyword>
<keyword id="KW-0378">Hydrolase</keyword>
<keyword id="KW-0413">Isomerase</keyword>
<keyword id="KW-0597">Phosphoprotein</keyword>
<keyword id="KW-1185">Reference proteome</keyword>